<protein>
    <recommendedName>
        <fullName>Cuticle collagen 144</fullName>
    </recommendedName>
</protein>
<proteinExistence type="inferred from homology"/>
<reference evidence="4" key="1">
    <citation type="journal article" date="2003" name="PLoS Biol.">
        <title>The genome sequence of Caenorhabditis briggsae: a platform for comparative genomics.</title>
        <authorList>
            <person name="Stein L.D."/>
            <person name="Bao Z."/>
            <person name="Blasiar D."/>
            <person name="Blumenthal T."/>
            <person name="Brent M.R."/>
            <person name="Chen N."/>
            <person name="Chinwalla A."/>
            <person name="Clarke L."/>
            <person name="Clee C."/>
            <person name="Coghlan A."/>
            <person name="Coulson A."/>
            <person name="D'Eustachio P."/>
            <person name="Fitch D.H.A."/>
            <person name="Fulton L.A."/>
            <person name="Fulton R.E."/>
            <person name="Griffiths-Jones S."/>
            <person name="Harris T.W."/>
            <person name="Hillier L.W."/>
            <person name="Kamath R."/>
            <person name="Kuwabara P.E."/>
            <person name="Mardis E.R."/>
            <person name="Marra M.A."/>
            <person name="Miner T.L."/>
            <person name="Minx P."/>
            <person name="Mullikin J.C."/>
            <person name="Plumb R.W."/>
            <person name="Rogers J."/>
            <person name="Schein J.E."/>
            <person name="Sohrmann M."/>
            <person name="Spieth J."/>
            <person name="Stajich J.E."/>
            <person name="Wei C."/>
            <person name="Willey D."/>
            <person name="Wilson R.K."/>
            <person name="Durbin R.M."/>
            <person name="Waterston R.H."/>
        </authorList>
    </citation>
    <scope>NUCLEOTIDE SEQUENCE [LARGE SCALE GENOMIC DNA]</scope>
    <source>
        <strain evidence="4">AF16</strain>
    </source>
</reference>
<accession>A8XV36</accession>
<evidence type="ECO:0000255" key="1"/>
<evidence type="ECO:0000256" key="2">
    <source>
        <dbReference type="SAM" id="MobiDB-lite"/>
    </source>
</evidence>
<evidence type="ECO:0000305" key="3"/>
<evidence type="ECO:0000312" key="4">
    <source>
        <dbReference type="EMBL" id="CAP36503.1"/>
    </source>
</evidence>
<evidence type="ECO:0000312" key="5">
    <source>
        <dbReference type="WormBase" id="CBG19216"/>
    </source>
</evidence>
<sequence>MEKILVTISTGAASFAVLAVLFTIPSLYNTINEVHDEVLDGVSVFRVETDSAWTEMMDIQITVTPPTKPRVNPFNSIFRQKRQTFSGLPAWCQCEPTKPTCPPGPPGPPGQPGQPGTPGAPGPKGEDNTSTYAPITCAPVSQDCVKCPQGPAGPEGPAGPAGPAGPDGQPGAPGNAGNPGSDGQPGAPGDDGQPGAPGQDGQPGAPGQDGQRGSGAPGAPGAPGNAGPAGPAGQDGAPGQDGQPGPAGPAGQDGAPGNAGSDGQPGAPGGPGLPGNDAAYCACPPRSAVFVSRH</sequence>
<keyword id="KW-0176">Collagen</keyword>
<keyword id="KW-0193">Cuticle</keyword>
<keyword id="KW-1015">Disulfide bond</keyword>
<keyword id="KW-1185">Reference proteome</keyword>
<keyword id="KW-0677">Repeat</keyword>
<keyword id="KW-0732">Signal</keyword>
<comment type="function">
    <text evidence="3">Nematode cuticles are composed largely of collagen-like proteins (Probable). The cuticle functions both as an exoskeleton and as a barrier to protect the worm from its environment (Probable).</text>
</comment>
<comment type="subunit">
    <text evidence="3">Collagen polypeptide chains are complexed within the cuticle by disulfide bonds and other types of covalent cross-links.</text>
</comment>
<organism>
    <name type="scientific">Caenorhabditis briggsae</name>
    <dbReference type="NCBI Taxonomy" id="6238"/>
    <lineage>
        <taxon>Eukaryota</taxon>
        <taxon>Metazoa</taxon>
        <taxon>Ecdysozoa</taxon>
        <taxon>Nematoda</taxon>
        <taxon>Chromadorea</taxon>
        <taxon>Rhabditida</taxon>
        <taxon>Rhabditina</taxon>
        <taxon>Rhabditomorpha</taxon>
        <taxon>Rhabditoidea</taxon>
        <taxon>Rhabditidae</taxon>
        <taxon>Peloderinae</taxon>
        <taxon>Caenorhabditis</taxon>
    </lineage>
</organism>
<name>CO144_CAEBR</name>
<dbReference type="EMBL" id="HE601047">
    <property type="protein sequence ID" value="CAP36503.1"/>
    <property type="molecule type" value="Genomic_DNA"/>
</dbReference>
<dbReference type="RefSeq" id="XP_002637495.1">
    <property type="nucleotide sequence ID" value="XM_002637449.1"/>
</dbReference>
<dbReference type="SMR" id="A8XV36"/>
<dbReference type="FunCoup" id="A8XV36">
    <property type="interactions" value="57"/>
</dbReference>
<dbReference type="STRING" id="6238.A8XV36"/>
<dbReference type="EnsemblMetazoa" id="CBG19216.1">
    <property type="protein sequence ID" value="CBG19216.1"/>
    <property type="gene ID" value="WBGene00038474"/>
</dbReference>
<dbReference type="GeneID" id="8579490"/>
<dbReference type="KEGG" id="cbr:CBG_19216"/>
<dbReference type="CTD" id="8579490"/>
<dbReference type="WormBase" id="CBG19216">
    <property type="protein sequence ID" value="CBP11098"/>
    <property type="gene ID" value="WBGene00038474"/>
    <property type="gene designation" value="Cbr-col-144"/>
</dbReference>
<dbReference type="eggNOG" id="KOG3544">
    <property type="taxonomic scope" value="Eukaryota"/>
</dbReference>
<dbReference type="HOGENOM" id="CLU_001074_4_3_1"/>
<dbReference type="InParanoid" id="A8XV36"/>
<dbReference type="OMA" id="RNDIKYC"/>
<dbReference type="Proteomes" id="UP000008549">
    <property type="component" value="Unassembled WGS sequence"/>
</dbReference>
<dbReference type="GO" id="GO:0005581">
    <property type="term" value="C:collagen trimer"/>
    <property type="evidence" value="ECO:0007669"/>
    <property type="project" value="UniProtKB-KW"/>
</dbReference>
<dbReference type="GO" id="GO:0042302">
    <property type="term" value="F:structural constituent of cuticle"/>
    <property type="evidence" value="ECO:0007669"/>
    <property type="project" value="UniProtKB-KW"/>
</dbReference>
<dbReference type="Gene3D" id="1.20.5.320">
    <property type="entry name" value="6-Phosphogluconate Dehydrogenase, domain 3"/>
    <property type="match status" value="1"/>
</dbReference>
<dbReference type="InterPro" id="IPR002486">
    <property type="entry name" value="Col_cuticle_N"/>
</dbReference>
<dbReference type="InterPro" id="IPR008160">
    <property type="entry name" value="Collagen"/>
</dbReference>
<dbReference type="PANTHER" id="PTHR24637">
    <property type="entry name" value="COLLAGEN"/>
    <property type="match status" value="1"/>
</dbReference>
<dbReference type="PANTHER" id="PTHR24637:SF194">
    <property type="entry name" value="CUTICLE COLLAGEN 10-RELATED"/>
    <property type="match status" value="1"/>
</dbReference>
<dbReference type="Pfam" id="PF01484">
    <property type="entry name" value="Col_cuticle_N"/>
    <property type="match status" value="1"/>
</dbReference>
<dbReference type="Pfam" id="PF01391">
    <property type="entry name" value="Collagen"/>
    <property type="match status" value="1"/>
</dbReference>
<dbReference type="SMART" id="SM01088">
    <property type="entry name" value="Col_cuticle_N"/>
    <property type="match status" value="1"/>
</dbReference>
<gene>
    <name evidence="5" type="primary">col-144</name>
    <name evidence="5" type="ORF">CBG19216</name>
</gene>
<feature type="signal peptide" evidence="1">
    <location>
        <begin position="1"/>
        <end position="30"/>
    </location>
</feature>
<feature type="chain" id="PRO_0000351210" description="Cuticle collagen 144" evidence="1">
    <location>
        <begin position="31"/>
        <end position="294"/>
    </location>
</feature>
<feature type="region of interest" description="Disordered" evidence="2">
    <location>
        <begin position="100"/>
        <end position="134"/>
    </location>
</feature>
<feature type="region of interest" description="Triple-helical region" evidence="1">
    <location>
        <begin position="102"/>
        <end position="127"/>
    </location>
</feature>
<feature type="region of interest" description="Disordered" evidence="2">
    <location>
        <begin position="148"/>
        <end position="278"/>
    </location>
</feature>
<feature type="region of interest" description="Triple-helical region" evidence="1">
    <location>
        <begin position="153"/>
        <end position="274"/>
    </location>
</feature>
<feature type="compositionally biased region" description="Pro residues" evidence="2">
    <location>
        <begin position="100"/>
        <end position="112"/>
    </location>
</feature>
<feature type="compositionally biased region" description="Low complexity" evidence="2">
    <location>
        <begin position="164"/>
        <end position="209"/>
    </location>
</feature>
<feature type="compositionally biased region" description="Low complexity" evidence="2">
    <location>
        <begin position="219"/>
        <end position="265"/>
    </location>
</feature>